<accession>Q7NZ10</accession>
<proteinExistence type="inferred from homology"/>
<dbReference type="EC" id="3.6.1.-" evidence="1"/>
<dbReference type="EMBL" id="AE016825">
    <property type="protein sequence ID" value="AAQ58787.1"/>
    <property type="molecule type" value="Genomic_DNA"/>
</dbReference>
<dbReference type="RefSeq" id="WP_011134667.1">
    <property type="nucleotide sequence ID" value="NC_005085.1"/>
</dbReference>
<dbReference type="SMR" id="Q7NZ10"/>
<dbReference type="STRING" id="243365.CV_1112"/>
<dbReference type="GeneID" id="66366814"/>
<dbReference type="KEGG" id="cvi:CV_1112"/>
<dbReference type="eggNOG" id="COG0494">
    <property type="taxonomic scope" value="Bacteria"/>
</dbReference>
<dbReference type="HOGENOM" id="CLU_087195_3_1_4"/>
<dbReference type="OrthoDB" id="9816040at2"/>
<dbReference type="Proteomes" id="UP000001424">
    <property type="component" value="Chromosome"/>
</dbReference>
<dbReference type="GO" id="GO:0016462">
    <property type="term" value="F:pyrophosphatase activity"/>
    <property type="evidence" value="ECO:0007669"/>
    <property type="project" value="UniProtKB-ARBA"/>
</dbReference>
<dbReference type="CDD" id="cd03671">
    <property type="entry name" value="NUDIX_Ap4A_hydrolase_plant_like"/>
    <property type="match status" value="1"/>
</dbReference>
<dbReference type="FunFam" id="3.90.79.10:FF:000001">
    <property type="entry name" value="RNA pyrophosphohydrolase"/>
    <property type="match status" value="1"/>
</dbReference>
<dbReference type="Gene3D" id="3.90.79.10">
    <property type="entry name" value="Nucleoside Triphosphate Pyrophosphohydrolase"/>
    <property type="match status" value="1"/>
</dbReference>
<dbReference type="HAMAP" id="MF_00298">
    <property type="entry name" value="Nudix_RppH"/>
    <property type="match status" value="1"/>
</dbReference>
<dbReference type="InterPro" id="IPR020476">
    <property type="entry name" value="Nudix_hydrolase"/>
</dbReference>
<dbReference type="InterPro" id="IPR015797">
    <property type="entry name" value="NUDIX_hydrolase-like_dom_sf"/>
</dbReference>
<dbReference type="InterPro" id="IPR020084">
    <property type="entry name" value="NUDIX_hydrolase_CS"/>
</dbReference>
<dbReference type="InterPro" id="IPR000086">
    <property type="entry name" value="NUDIX_hydrolase_dom"/>
</dbReference>
<dbReference type="InterPro" id="IPR022927">
    <property type="entry name" value="RppH"/>
</dbReference>
<dbReference type="NCBIfam" id="NF001935">
    <property type="entry name" value="PRK00714.1-2"/>
    <property type="match status" value="1"/>
</dbReference>
<dbReference type="NCBIfam" id="NF001937">
    <property type="entry name" value="PRK00714.1-4"/>
    <property type="match status" value="1"/>
</dbReference>
<dbReference type="NCBIfam" id="NF001938">
    <property type="entry name" value="PRK00714.1-5"/>
    <property type="match status" value="1"/>
</dbReference>
<dbReference type="PANTHER" id="PTHR43736">
    <property type="entry name" value="ADP-RIBOSE PYROPHOSPHATASE"/>
    <property type="match status" value="1"/>
</dbReference>
<dbReference type="PANTHER" id="PTHR43736:SF1">
    <property type="entry name" value="DIHYDRONEOPTERIN TRIPHOSPHATE DIPHOSPHATASE"/>
    <property type="match status" value="1"/>
</dbReference>
<dbReference type="Pfam" id="PF00293">
    <property type="entry name" value="NUDIX"/>
    <property type="match status" value="1"/>
</dbReference>
<dbReference type="PRINTS" id="PR00502">
    <property type="entry name" value="NUDIXFAMILY"/>
</dbReference>
<dbReference type="SUPFAM" id="SSF55811">
    <property type="entry name" value="Nudix"/>
    <property type="match status" value="1"/>
</dbReference>
<dbReference type="PROSITE" id="PS51462">
    <property type="entry name" value="NUDIX"/>
    <property type="match status" value="1"/>
</dbReference>
<dbReference type="PROSITE" id="PS00893">
    <property type="entry name" value="NUDIX_BOX"/>
    <property type="match status" value="1"/>
</dbReference>
<organism>
    <name type="scientific">Chromobacterium violaceum (strain ATCC 12472 / DSM 30191 / JCM 1249 / CCUG 213 / NBRC 12614 / NCIMB 9131 / NCTC 9757 / MK)</name>
    <dbReference type="NCBI Taxonomy" id="243365"/>
    <lineage>
        <taxon>Bacteria</taxon>
        <taxon>Pseudomonadati</taxon>
        <taxon>Pseudomonadota</taxon>
        <taxon>Betaproteobacteria</taxon>
        <taxon>Neisseriales</taxon>
        <taxon>Chromobacteriaceae</taxon>
        <taxon>Chromobacterium</taxon>
    </lineage>
</organism>
<gene>
    <name evidence="1" type="primary">rppH</name>
    <name evidence="1" type="synonym">nudH</name>
    <name type="ordered locus">CV_1112</name>
</gene>
<comment type="function">
    <text evidence="1">Accelerates the degradation of transcripts by removing pyrophosphate from the 5'-end of triphosphorylated RNA, leading to a more labile monophosphorylated state that can stimulate subsequent ribonuclease cleavage.</text>
</comment>
<comment type="cofactor">
    <cofactor evidence="1">
        <name>a divalent metal cation</name>
        <dbReference type="ChEBI" id="CHEBI:60240"/>
    </cofactor>
</comment>
<comment type="similarity">
    <text evidence="1">Belongs to the Nudix hydrolase family. RppH subfamily.</text>
</comment>
<name>RPPH_CHRVO</name>
<evidence type="ECO:0000255" key="1">
    <source>
        <dbReference type="HAMAP-Rule" id="MF_00298"/>
    </source>
</evidence>
<keyword id="KW-0378">Hydrolase</keyword>
<keyword id="KW-1185">Reference proteome</keyword>
<reference key="1">
    <citation type="journal article" date="2003" name="Proc. Natl. Acad. Sci. U.S.A.">
        <title>The complete genome sequence of Chromobacterium violaceum reveals remarkable and exploitable bacterial adaptability.</title>
        <authorList>
            <person name="Vasconcelos A.T.R."/>
            <person name="de Almeida D.F."/>
            <person name="Hungria M."/>
            <person name="Guimaraes C.T."/>
            <person name="Antonio R.V."/>
            <person name="Almeida F.C."/>
            <person name="de Almeida L.G.P."/>
            <person name="de Almeida R."/>
            <person name="Alves-Gomes J.A."/>
            <person name="Andrade E.M."/>
            <person name="Araripe J."/>
            <person name="de Araujo M.F.F."/>
            <person name="Astolfi-Filho S."/>
            <person name="Azevedo V."/>
            <person name="Baptista A.J."/>
            <person name="Bataus L.A.M."/>
            <person name="Batista J.S."/>
            <person name="Belo A."/>
            <person name="van den Berg C."/>
            <person name="Bogo M."/>
            <person name="Bonatto S."/>
            <person name="Bordignon J."/>
            <person name="Brigido M.M."/>
            <person name="Brito C.A."/>
            <person name="Brocchi M."/>
            <person name="Burity H.A."/>
            <person name="Camargo A.A."/>
            <person name="Cardoso D.D.P."/>
            <person name="Carneiro N.P."/>
            <person name="Carraro D.M."/>
            <person name="Carvalho C.M.B."/>
            <person name="Cascardo J.C.M."/>
            <person name="Cavada B.S."/>
            <person name="Chueire L.M.O."/>
            <person name="Creczynski-Pasa T.B."/>
            <person name="Cunha-Junior N.C."/>
            <person name="Fagundes N."/>
            <person name="Falcao C.L."/>
            <person name="Fantinatti F."/>
            <person name="Farias I.P."/>
            <person name="Felipe M.S.S."/>
            <person name="Ferrari L.P."/>
            <person name="Ferro J.A."/>
            <person name="Ferro M.I.T."/>
            <person name="Franco G.R."/>
            <person name="Freitas N.S.A."/>
            <person name="Furlan L.R."/>
            <person name="Gazzinelli R.T."/>
            <person name="Gomes E.A."/>
            <person name="Goncalves P.R."/>
            <person name="Grangeiro T.B."/>
            <person name="Grattapaglia D."/>
            <person name="Grisard E.C."/>
            <person name="Hanna E.S."/>
            <person name="Jardim S.N."/>
            <person name="Laurino J."/>
            <person name="Leoi L.C.T."/>
            <person name="Lima L.F.A."/>
            <person name="Loureiro M.F."/>
            <person name="Lyra M.C.C.P."/>
            <person name="Madeira H.M.F."/>
            <person name="Manfio G.P."/>
            <person name="Maranhao A.Q."/>
            <person name="Martins W.S."/>
            <person name="di Mauro S.M.Z."/>
            <person name="de Medeiros S.R.B."/>
            <person name="Meissner R.V."/>
            <person name="Moreira M.A.M."/>
            <person name="Nascimento F.F."/>
            <person name="Nicolas M.F."/>
            <person name="Oliveira J.G."/>
            <person name="Oliveira S.C."/>
            <person name="Paixao R.F.C."/>
            <person name="Parente J.A."/>
            <person name="Pedrosa F.O."/>
            <person name="Pena S.D.J."/>
            <person name="Pereira J.O."/>
            <person name="Pereira M."/>
            <person name="Pinto L.S.R.C."/>
            <person name="Pinto L.S."/>
            <person name="Porto J.I.R."/>
            <person name="Potrich D.P."/>
            <person name="Ramalho-Neto C.E."/>
            <person name="Reis A.M.M."/>
            <person name="Rigo L.U."/>
            <person name="Rondinelli E."/>
            <person name="Santos E.B.P."/>
            <person name="Santos F.R."/>
            <person name="Schneider M.P.C."/>
            <person name="Seuanez H.N."/>
            <person name="Silva A.M.R."/>
            <person name="da Silva A.L.C."/>
            <person name="Silva D.W."/>
            <person name="Silva R."/>
            <person name="Simoes I.C."/>
            <person name="Simon D."/>
            <person name="Soares C.M.A."/>
            <person name="Soares R.B.A."/>
            <person name="Souza E.M."/>
            <person name="Souza K.R.L."/>
            <person name="Souza R.C."/>
            <person name="Steffens M.B.R."/>
            <person name="Steindel M."/>
            <person name="Teixeira S.R."/>
            <person name="Urmenyi T."/>
            <person name="Vettore A."/>
            <person name="Wassem R."/>
            <person name="Zaha A."/>
            <person name="Simpson A.J.G."/>
        </authorList>
    </citation>
    <scope>NUCLEOTIDE SEQUENCE [LARGE SCALE GENOMIC DNA]</scope>
    <source>
        <strain>ATCC 12472 / DSM 30191 / JCM 1249 / CCUG 213 / NBRC 12614 / NCIMB 9131 / NCTC 9757 / MK</strain>
    </source>
</reference>
<sequence>MLDRDGYRPNVGIILTNAKNEVFWGKRVREHSWQFPQGGIKPGESPEAAMYRELLEEVGLLPQHVKILGRTRDWLRYEVPTNWVRREWRGSYKGQKQIWFLLRLVGRDSDVCLRATNHPEFDGWRWNDYWAPVDAVIEFKRDVYERALSELARFMRGVESHHAYLARTSTQSEQ</sequence>
<feature type="chain" id="PRO_0000057003" description="RNA pyrophosphohydrolase">
    <location>
        <begin position="1"/>
        <end position="174"/>
    </location>
</feature>
<feature type="domain" description="Nudix hydrolase" evidence="1">
    <location>
        <begin position="6"/>
        <end position="149"/>
    </location>
</feature>
<feature type="short sequence motif" description="Nudix box">
    <location>
        <begin position="38"/>
        <end position="59"/>
    </location>
</feature>
<protein>
    <recommendedName>
        <fullName evidence="1">RNA pyrophosphohydrolase</fullName>
        <ecNumber evidence="1">3.6.1.-</ecNumber>
    </recommendedName>
    <alternativeName>
        <fullName evidence="1">(Di)nucleoside polyphosphate hydrolase</fullName>
    </alternativeName>
</protein>